<comment type="similarity">
    <text evidence="1">Belongs to the bacterial ribosomal protein bL27 family.</text>
</comment>
<sequence>MARKKGGSGAKNGRDSNPKYLGVKVYGGTEVSAGSILVRQRGTSIHPGNNVGCGKDYTLFAKADGVVTYHERKGRKLASIEAK</sequence>
<keyword id="KW-1185">Reference proteome</keyword>
<keyword id="KW-0687">Ribonucleoprotein</keyword>
<keyword id="KW-0689">Ribosomal protein</keyword>
<name>RL27_TREDE</name>
<gene>
    <name evidence="1" type="primary">rpmA</name>
    <name type="ordered locus">TDE_1749</name>
</gene>
<feature type="chain" id="PRO_0000181196" description="Large ribosomal subunit protein bL27">
    <location>
        <begin position="1"/>
        <end position="83"/>
    </location>
</feature>
<evidence type="ECO:0000255" key="1">
    <source>
        <dbReference type="HAMAP-Rule" id="MF_00539"/>
    </source>
</evidence>
<evidence type="ECO:0000305" key="2"/>
<dbReference type="EMBL" id="AE017226">
    <property type="protein sequence ID" value="AAS12264.1"/>
    <property type="molecule type" value="Genomic_DNA"/>
</dbReference>
<dbReference type="RefSeq" id="NP_972353.1">
    <property type="nucleotide sequence ID" value="NC_002967.9"/>
</dbReference>
<dbReference type="RefSeq" id="WP_002669471.1">
    <property type="nucleotide sequence ID" value="NC_002967.9"/>
</dbReference>
<dbReference type="SMR" id="Q73LW3"/>
<dbReference type="STRING" id="243275.TDE_1749"/>
<dbReference type="PaxDb" id="243275-TDE_1749"/>
<dbReference type="GeneID" id="2740594"/>
<dbReference type="KEGG" id="tde:TDE_1749"/>
<dbReference type="PATRIC" id="fig|243275.7.peg.1672"/>
<dbReference type="eggNOG" id="COG0211">
    <property type="taxonomic scope" value="Bacteria"/>
</dbReference>
<dbReference type="HOGENOM" id="CLU_095424_4_1_12"/>
<dbReference type="OrthoDB" id="9803474at2"/>
<dbReference type="Proteomes" id="UP000008212">
    <property type="component" value="Chromosome"/>
</dbReference>
<dbReference type="GO" id="GO:0022625">
    <property type="term" value="C:cytosolic large ribosomal subunit"/>
    <property type="evidence" value="ECO:0007669"/>
    <property type="project" value="TreeGrafter"/>
</dbReference>
<dbReference type="GO" id="GO:0003735">
    <property type="term" value="F:structural constituent of ribosome"/>
    <property type="evidence" value="ECO:0007669"/>
    <property type="project" value="InterPro"/>
</dbReference>
<dbReference type="GO" id="GO:0006412">
    <property type="term" value="P:translation"/>
    <property type="evidence" value="ECO:0007669"/>
    <property type="project" value="UniProtKB-UniRule"/>
</dbReference>
<dbReference type="FunFam" id="2.40.50.100:FF:000020">
    <property type="entry name" value="50S ribosomal protein L27"/>
    <property type="match status" value="1"/>
</dbReference>
<dbReference type="Gene3D" id="2.40.50.100">
    <property type="match status" value="1"/>
</dbReference>
<dbReference type="HAMAP" id="MF_00539">
    <property type="entry name" value="Ribosomal_bL27"/>
    <property type="match status" value="1"/>
</dbReference>
<dbReference type="InterPro" id="IPR001684">
    <property type="entry name" value="Ribosomal_bL27"/>
</dbReference>
<dbReference type="InterPro" id="IPR018261">
    <property type="entry name" value="Ribosomal_bL27_CS"/>
</dbReference>
<dbReference type="NCBIfam" id="TIGR00062">
    <property type="entry name" value="L27"/>
    <property type="match status" value="1"/>
</dbReference>
<dbReference type="PANTHER" id="PTHR15893:SF0">
    <property type="entry name" value="LARGE RIBOSOMAL SUBUNIT PROTEIN BL27M"/>
    <property type="match status" value="1"/>
</dbReference>
<dbReference type="PANTHER" id="PTHR15893">
    <property type="entry name" value="RIBOSOMAL PROTEIN L27"/>
    <property type="match status" value="1"/>
</dbReference>
<dbReference type="Pfam" id="PF01016">
    <property type="entry name" value="Ribosomal_L27"/>
    <property type="match status" value="1"/>
</dbReference>
<dbReference type="PRINTS" id="PR00063">
    <property type="entry name" value="RIBOSOMALL27"/>
</dbReference>
<dbReference type="SUPFAM" id="SSF110324">
    <property type="entry name" value="Ribosomal L27 protein-like"/>
    <property type="match status" value="1"/>
</dbReference>
<dbReference type="PROSITE" id="PS00831">
    <property type="entry name" value="RIBOSOMAL_L27"/>
    <property type="match status" value="1"/>
</dbReference>
<protein>
    <recommendedName>
        <fullName evidence="1">Large ribosomal subunit protein bL27</fullName>
    </recommendedName>
    <alternativeName>
        <fullName evidence="2">50S ribosomal protein L27</fullName>
    </alternativeName>
</protein>
<reference key="1">
    <citation type="journal article" date="2004" name="Proc. Natl. Acad. Sci. U.S.A.">
        <title>Comparison of the genome of the oral pathogen Treponema denticola with other spirochete genomes.</title>
        <authorList>
            <person name="Seshadri R."/>
            <person name="Myers G.S.A."/>
            <person name="Tettelin H."/>
            <person name="Eisen J.A."/>
            <person name="Heidelberg J.F."/>
            <person name="Dodson R.J."/>
            <person name="Davidsen T.M."/>
            <person name="DeBoy R.T."/>
            <person name="Fouts D.E."/>
            <person name="Haft D.H."/>
            <person name="Selengut J."/>
            <person name="Ren Q."/>
            <person name="Brinkac L.M."/>
            <person name="Madupu R."/>
            <person name="Kolonay J.F."/>
            <person name="Durkin S.A."/>
            <person name="Daugherty S.C."/>
            <person name="Shetty J."/>
            <person name="Shvartsbeyn A."/>
            <person name="Gebregeorgis E."/>
            <person name="Geer K."/>
            <person name="Tsegaye G."/>
            <person name="Malek J.A."/>
            <person name="Ayodeji B."/>
            <person name="Shatsman S."/>
            <person name="McLeod M.P."/>
            <person name="Smajs D."/>
            <person name="Howell J.K."/>
            <person name="Pal S."/>
            <person name="Amin A."/>
            <person name="Vashisth P."/>
            <person name="McNeill T.Z."/>
            <person name="Xiang Q."/>
            <person name="Sodergren E."/>
            <person name="Baca E."/>
            <person name="Weinstock G.M."/>
            <person name="Norris S.J."/>
            <person name="Fraser C.M."/>
            <person name="Paulsen I.T."/>
        </authorList>
    </citation>
    <scope>NUCLEOTIDE SEQUENCE [LARGE SCALE GENOMIC DNA]</scope>
    <source>
        <strain>ATCC 35405 / DSM 14222 / CIP 103919 / JCM 8153 / KCTC 15104</strain>
    </source>
</reference>
<organism>
    <name type="scientific">Treponema denticola (strain ATCC 35405 / DSM 14222 / CIP 103919 / JCM 8153 / KCTC 15104)</name>
    <dbReference type="NCBI Taxonomy" id="243275"/>
    <lineage>
        <taxon>Bacteria</taxon>
        <taxon>Pseudomonadati</taxon>
        <taxon>Spirochaetota</taxon>
        <taxon>Spirochaetia</taxon>
        <taxon>Spirochaetales</taxon>
        <taxon>Treponemataceae</taxon>
        <taxon>Treponema</taxon>
    </lineage>
</organism>
<accession>Q73LW3</accession>
<proteinExistence type="inferred from homology"/>